<comment type="function">
    <text evidence="3">Enzyme responsible for the N-acetyl-histidine (NAH) synthesis, which is a major constituent of brain and lens of ectothermic vertebrates.</text>
</comment>
<comment type="catalytic activity">
    <reaction evidence="3">
        <text>L-histidine + acetyl-CoA = N(alpha)-acetyl-L-histidine + CoA + H(+)</text>
        <dbReference type="Rhea" id="RHEA:24596"/>
        <dbReference type="ChEBI" id="CHEBI:15378"/>
        <dbReference type="ChEBI" id="CHEBI:57287"/>
        <dbReference type="ChEBI" id="CHEBI:57288"/>
        <dbReference type="ChEBI" id="CHEBI:57595"/>
        <dbReference type="ChEBI" id="CHEBI:57772"/>
        <dbReference type="EC" id="2.3.1.33"/>
    </reaction>
</comment>
<comment type="biophysicochemical properties">
    <kinetics>
        <KM evidence="4">27 uM for acetyl-CoA</KM>
        <KM evidence="4">450 uM for L-histidine</KM>
    </kinetics>
    <phDependence>
        <text evidence="4">Optimum pH is 7.0-9.5.</text>
    </phDependence>
</comment>
<comment type="tissue specificity">
    <text evidence="3">Expressed exclusively in the brain and lens.</text>
</comment>
<comment type="miscellaneous">
    <text evidence="5">Strong histidine N-acetyltransferase activity has been detected in ectothermic vertebrates and not in endothermic birds and mammals.</text>
</comment>
<evidence type="ECO:0000250" key="1">
    <source>
        <dbReference type="UniProtKB" id="U3U715"/>
    </source>
</evidence>
<evidence type="ECO:0000255" key="2">
    <source>
        <dbReference type="PROSITE-ProRule" id="PRU00532"/>
    </source>
</evidence>
<evidence type="ECO:0000269" key="3">
    <source>
    </source>
</evidence>
<evidence type="ECO:0000269" key="4">
    <source>
    </source>
</evidence>
<evidence type="ECO:0000305" key="5">
    <source>
    </source>
</evidence>
<accession>I3J7Q8</accession>
<dbReference type="EC" id="2.3.1.33" evidence="3"/>
<dbReference type="EMBL" id="AB701381">
    <property type="protein sequence ID" value="BAO00797.1"/>
    <property type="molecule type" value="mRNA"/>
</dbReference>
<dbReference type="EMBL" id="AB701382">
    <property type="protein sequence ID" value="BAO00798.1"/>
    <property type="molecule type" value="mRNA"/>
</dbReference>
<dbReference type="EMBL" id="AERX01050570">
    <property type="status" value="NOT_ANNOTATED_CDS"/>
    <property type="molecule type" value="Genomic_DNA"/>
</dbReference>
<dbReference type="EMBL" id="AERX01050571">
    <property type="status" value="NOT_ANNOTATED_CDS"/>
    <property type="molecule type" value="Genomic_DNA"/>
</dbReference>
<dbReference type="EMBL" id="AERX01050572">
    <property type="status" value="NOT_ANNOTATED_CDS"/>
    <property type="molecule type" value="Genomic_DNA"/>
</dbReference>
<dbReference type="EMBL" id="AERX01050573">
    <property type="status" value="NOT_ANNOTATED_CDS"/>
    <property type="molecule type" value="Genomic_DNA"/>
</dbReference>
<dbReference type="RefSeq" id="NP_001272326.1">
    <property type="nucleotide sequence ID" value="NM_001285397.1"/>
</dbReference>
<dbReference type="RefSeq" id="XP_005463482.1">
    <property type="nucleotide sequence ID" value="XM_005463425.3"/>
</dbReference>
<dbReference type="RefSeq" id="XP_019202559.1">
    <property type="nucleotide sequence ID" value="XM_019347014.1"/>
</dbReference>
<dbReference type="SMR" id="I3J7Q8"/>
<dbReference type="FunCoup" id="I3J7Q8">
    <property type="interactions" value="111"/>
</dbReference>
<dbReference type="Ensembl" id="ENSONIT00000004901.2">
    <property type="protein sequence ID" value="ENSONIP00000004898.1"/>
    <property type="gene ID" value="ENSONIG00000003888.2"/>
</dbReference>
<dbReference type="GeneID" id="100702495"/>
<dbReference type="KEGG" id="onl:100702495"/>
<dbReference type="CTD" id="375607"/>
<dbReference type="eggNOG" id="ENOG502QW73">
    <property type="taxonomic scope" value="Eukaryota"/>
</dbReference>
<dbReference type="GeneTree" id="ENSGT00390000016398"/>
<dbReference type="HOGENOM" id="CLU_074598_0_0_1"/>
<dbReference type="InParanoid" id="I3J7Q8"/>
<dbReference type="OMA" id="WHYLNID"/>
<dbReference type="OrthoDB" id="8889733at2759"/>
<dbReference type="TreeFam" id="TF331490"/>
<dbReference type="BRENDA" id="2.3.1.33">
    <property type="organism ID" value="4429"/>
</dbReference>
<dbReference type="Proteomes" id="UP000005207">
    <property type="component" value="Linkage group LG3"/>
</dbReference>
<dbReference type="GO" id="GO:0047981">
    <property type="term" value="F:L-histidine N-acetyltransferase activity"/>
    <property type="evidence" value="ECO:0000314"/>
    <property type="project" value="UniProtKB"/>
</dbReference>
<dbReference type="CDD" id="cd04301">
    <property type="entry name" value="NAT_SF"/>
    <property type="match status" value="1"/>
</dbReference>
<dbReference type="FunFam" id="3.40.630.30:FF:000039">
    <property type="entry name" value="Probable N-acetyltransferase 16"/>
    <property type="match status" value="1"/>
</dbReference>
<dbReference type="Gene3D" id="3.40.630.30">
    <property type="match status" value="1"/>
</dbReference>
<dbReference type="InterPro" id="IPR016181">
    <property type="entry name" value="Acyl_CoA_acyltransferase"/>
</dbReference>
<dbReference type="InterPro" id="IPR000182">
    <property type="entry name" value="GNAT_dom"/>
</dbReference>
<dbReference type="InterPro" id="IPR056483">
    <property type="entry name" value="Hisat_C"/>
</dbReference>
<dbReference type="PANTHER" id="PTHR47403">
    <property type="entry name" value="LOC100145250 PROTEIN"/>
    <property type="match status" value="1"/>
</dbReference>
<dbReference type="PANTHER" id="PTHR47403:SF3">
    <property type="entry name" value="N-ACETYLTRANSFERASE 16-RELATED"/>
    <property type="match status" value="1"/>
</dbReference>
<dbReference type="Pfam" id="PF00583">
    <property type="entry name" value="Acetyltransf_1"/>
    <property type="match status" value="1"/>
</dbReference>
<dbReference type="Pfam" id="PF24066">
    <property type="entry name" value="Hisat_C"/>
    <property type="match status" value="1"/>
</dbReference>
<dbReference type="SUPFAM" id="SSF55729">
    <property type="entry name" value="Acyl-CoA N-acyltransferases (Nat)"/>
    <property type="match status" value="1"/>
</dbReference>
<dbReference type="PROSITE" id="PS51186">
    <property type="entry name" value="GNAT"/>
    <property type="match status" value="1"/>
</dbReference>
<name>HISAT_ORENI</name>
<sequence length="337" mass="38413">MKIDTSLNMPQLPEALSQAGLQFSVATEEDFDEIMAMSQDIYGGLDYLPTRYTSWLQDTNRTVILARKHGKVIALESVCVIDDGETMLVEGLRVAPQERGKGVAGVLLRFCAELVKSRYPEVKVCRLTRDDQLGPKDFEKYRIITKQGILLMRFRAEDLKLHLSEFGLEGDNESTLSTFCSSPPPVRLDHTAIQQLYLNSDLLHGVLPNATIIQDWQPFKLLPSNMAILLKKEIDWMVDDMSNPTVASLCTFPFRVPIGDDWYYLNIDMFGKDLALARQQFLYHLQRHTATLKGHVMCQMFLDPPLWKAMAEFCHNTLSVELVKEYTEQCVVECDLI</sequence>
<protein>
    <recommendedName>
        <fullName>Histidine N-acetyltransferase</fullName>
        <ecNumber evidence="3">2.3.1.33</ecNumber>
    </recommendedName>
</protein>
<gene>
    <name type="primary">hisat</name>
</gene>
<organism>
    <name type="scientific">Oreochromis niloticus</name>
    <name type="common">Nile tilapia</name>
    <name type="synonym">Tilapia nilotica</name>
    <dbReference type="NCBI Taxonomy" id="8128"/>
    <lineage>
        <taxon>Eukaryota</taxon>
        <taxon>Metazoa</taxon>
        <taxon>Chordata</taxon>
        <taxon>Craniata</taxon>
        <taxon>Vertebrata</taxon>
        <taxon>Euteleostomi</taxon>
        <taxon>Actinopterygii</taxon>
        <taxon>Neopterygii</taxon>
        <taxon>Teleostei</taxon>
        <taxon>Neoteleostei</taxon>
        <taxon>Acanthomorphata</taxon>
        <taxon>Ovalentaria</taxon>
        <taxon>Cichlomorphae</taxon>
        <taxon>Cichliformes</taxon>
        <taxon>Cichlidae</taxon>
        <taxon>African cichlids</taxon>
        <taxon>Pseudocrenilabrinae</taxon>
        <taxon>Oreochromini</taxon>
        <taxon>Oreochromis</taxon>
    </lineage>
</organism>
<reference key="1">
    <citation type="journal article" date="2014" name="Biochim. Biophys. Acta">
        <title>An ectotherm homologue of human predicted gene NAT16 encodes histidine N-acetyltransferase responsible for Nalpha-acetylhistidine synthesis.</title>
        <authorList>
            <person name="Yamada S."/>
            <person name="Arikawa S."/>
        </authorList>
    </citation>
    <scope>NUCLEOTIDE SEQUENCE [MRNA]</scope>
    <scope>FUNCTION</scope>
    <scope>SUBSTRATE SPECIFICITY</scope>
    <scope>CATALYTIC ACTIVITY</scope>
    <scope>TISSUE SPECIFICITY</scope>
    <source>
        <tissue>Brain</tissue>
    </source>
</reference>
<reference key="2">
    <citation type="submission" date="2012-01" db="EMBL/GenBank/DDBJ databases">
        <title>The genome sequence of oreochromis niloticus (Nile Tilapia).</title>
        <authorList>
            <consortium name="Broad Institute Genome Assembly Team"/>
            <consortium name="Broad Institute Sequencing Platform"/>
            <person name="Di Palma F."/>
            <person name="Johnson J."/>
            <person name="Lander E.S."/>
            <person name="Lindblad-Toh K."/>
        </authorList>
    </citation>
    <scope>NUCLEOTIDE SEQUENCE [LARGE SCALE GENOMIC DNA]</scope>
</reference>
<reference key="3">
    <citation type="journal article" date="1995" name="Biochim. Biophys. Acta">
        <title>Partial purification and characterization of histidine acetyltransferase in brain of Nile tilapia (Oreochromis niloticus).</title>
        <authorList>
            <person name="Yamada S."/>
            <person name="Tanaka Y."/>
            <person name="Furuichi M."/>
        </authorList>
    </citation>
    <scope>BIOPHYSICOCHEMICAL PROPERTIES</scope>
</reference>
<keyword id="KW-0012">Acyltransferase</keyword>
<keyword id="KW-1185">Reference proteome</keyword>
<keyword id="KW-0808">Transferase</keyword>
<proteinExistence type="evidence at protein level"/>
<feature type="propeptide" id="PRO_0000432392" description="Removed in mature form" evidence="1">
    <location>
        <begin position="1"/>
        <end position="2"/>
    </location>
</feature>
<feature type="chain" id="PRO_0000432393" description="Histidine N-acetyltransferase">
    <location>
        <begin position="3"/>
        <end position="337"/>
    </location>
</feature>
<feature type="domain" description="N-acetyltransferase" evidence="2">
    <location>
        <begin position="21"/>
        <end position="157"/>
    </location>
</feature>